<sequence length="485" mass="50449">MAALMLQGTGSDVGKSVLVAGLCRALANRGLRVRPFKPQNMSNNAAVTIDGGEIGRAQALQALACRTPPHSDMNPVLLKPQADRTSQLIVHGRVRGTLGSGNFRAGRGALLPDVLESYGRLRRQCDIVIVEGAGSPAEINLRAGDIANMGFARAARVPVVLVGDIDRGGVIAAIVGTRTVIDAEDAAMIKGFVINKFRGDPALFDDGYRAIAERSGWPGLGVVPWLAAAARLPSEDAVILERRADAREGRRIVACPILPRIANFDDLDPLKQEPGVELLMVPPGQPIPAEAAIIVLPGSKATIADLAALRREGWDIDIKAHHRRGGLILGLCGGYQMLGTRIADPLGIEGAASEVEGLGLLDVTTELAPAKTLREVTGTAWNSPVAGYEMHMGATVGTDTARPFARIDGGGGEGAINAAGNVIGTYIHGLLASPALRSALLAKIGVAGNGRDHGADVDAALDDIAAELAIHIDIGALLRIAAHPV</sequence>
<name>COBQ_SPHAL</name>
<proteinExistence type="inferred from homology"/>
<dbReference type="EMBL" id="CP000356">
    <property type="protein sequence ID" value="ABF54461.1"/>
    <property type="molecule type" value="Genomic_DNA"/>
</dbReference>
<dbReference type="RefSeq" id="WP_011543026.1">
    <property type="nucleotide sequence ID" value="NC_008048.1"/>
</dbReference>
<dbReference type="SMR" id="Q1GPG1"/>
<dbReference type="STRING" id="317655.Sala_2756"/>
<dbReference type="KEGG" id="sal:Sala_2756"/>
<dbReference type="eggNOG" id="COG1492">
    <property type="taxonomic scope" value="Bacteria"/>
</dbReference>
<dbReference type="HOGENOM" id="CLU_019250_2_2_5"/>
<dbReference type="OrthoDB" id="9808302at2"/>
<dbReference type="UniPathway" id="UPA00148"/>
<dbReference type="Proteomes" id="UP000006578">
    <property type="component" value="Chromosome"/>
</dbReference>
<dbReference type="GO" id="GO:0015420">
    <property type="term" value="F:ABC-type vitamin B12 transporter activity"/>
    <property type="evidence" value="ECO:0007669"/>
    <property type="project" value="UniProtKB-UniRule"/>
</dbReference>
<dbReference type="GO" id="GO:0003824">
    <property type="term" value="F:catalytic activity"/>
    <property type="evidence" value="ECO:0007669"/>
    <property type="project" value="InterPro"/>
</dbReference>
<dbReference type="GO" id="GO:0009236">
    <property type="term" value="P:cobalamin biosynthetic process"/>
    <property type="evidence" value="ECO:0007669"/>
    <property type="project" value="UniProtKB-UniRule"/>
</dbReference>
<dbReference type="CDD" id="cd05389">
    <property type="entry name" value="CobQ_N"/>
    <property type="match status" value="1"/>
</dbReference>
<dbReference type="CDD" id="cd01750">
    <property type="entry name" value="GATase1_CobQ"/>
    <property type="match status" value="1"/>
</dbReference>
<dbReference type="Gene3D" id="3.40.50.880">
    <property type="match status" value="1"/>
</dbReference>
<dbReference type="Gene3D" id="3.40.50.300">
    <property type="entry name" value="P-loop containing nucleotide triphosphate hydrolases"/>
    <property type="match status" value="1"/>
</dbReference>
<dbReference type="HAMAP" id="MF_00028">
    <property type="entry name" value="CobQ"/>
    <property type="match status" value="1"/>
</dbReference>
<dbReference type="InterPro" id="IPR029062">
    <property type="entry name" value="Class_I_gatase-like"/>
</dbReference>
<dbReference type="InterPro" id="IPR002586">
    <property type="entry name" value="CobQ/CobB/MinD/ParA_Nub-bd_dom"/>
</dbReference>
<dbReference type="InterPro" id="IPR033949">
    <property type="entry name" value="CobQ_GATase1"/>
</dbReference>
<dbReference type="InterPro" id="IPR047045">
    <property type="entry name" value="CobQ_N"/>
</dbReference>
<dbReference type="InterPro" id="IPR004459">
    <property type="entry name" value="CobQ_synth"/>
</dbReference>
<dbReference type="InterPro" id="IPR011698">
    <property type="entry name" value="GATase_3"/>
</dbReference>
<dbReference type="InterPro" id="IPR027417">
    <property type="entry name" value="P-loop_NTPase"/>
</dbReference>
<dbReference type="NCBIfam" id="TIGR00313">
    <property type="entry name" value="cobQ"/>
    <property type="match status" value="1"/>
</dbReference>
<dbReference type="NCBIfam" id="NF001989">
    <property type="entry name" value="PRK00784.1"/>
    <property type="match status" value="1"/>
</dbReference>
<dbReference type="PANTHER" id="PTHR21343:SF1">
    <property type="entry name" value="COBYRIC ACID SYNTHASE"/>
    <property type="match status" value="1"/>
</dbReference>
<dbReference type="PANTHER" id="PTHR21343">
    <property type="entry name" value="DETHIOBIOTIN SYNTHETASE"/>
    <property type="match status" value="1"/>
</dbReference>
<dbReference type="Pfam" id="PF01656">
    <property type="entry name" value="CbiA"/>
    <property type="match status" value="1"/>
</dbReference>
<dbReference type="Pfam" id="PF07685">
    <property type="entry name" value="GATase_3"/>
    <property type="match status" value="1"/>
</dbReference>
<dbReference type="SUPFAM" id="SSF52317">
    <property type="entry name" value="Class I glutamine amidotransferase-like"/>
    <property type="match status" value="1"/>
</dbReference>
<dbReference type="SUPFAM" id="SSF52540">
    <property type="entry name" value="P-loop containing nucleoside triphosphate hydrolases"/>
    <property type="match status" value="1"/>
</dbReference>
<dbReference type="PROSITE" id="PS51274">
    <property type="entry name" value="GATASE_COBBQ"/>
    <property type="match status" value="1"/>
</dbReference>
<keyword id="KW-0169">Cobalamin biosynthesis</keyword>
<keyword id="KW-0315">Glutamine amidotransferase</keyword>
<keyword id="KW-1185">Reference proteome</keyword>
<gene>
    <name evidence="1" type="primary">cobQ</name>
    <name type="ordered locus">Sala_2756</name>
</gene>
<organism>
    <name type="scientific">Sphingopyxis alaskensis (strain DSM 13593 / LMG 18877 / RB2256)</name>
    <name type="common">Sphingomonas alaskensis</name>
    <dbReference type="NCBI Taxonomy" id="317655"/>
    <lineage>
        <taxon>Bacteria</taxon>
        <taxon>Pseudomonadati</taxon>
        <taxon>Pseudomonadota</taxon>
        <taxon>Alphaproteobacteria</taxon>
        <taxon>Sphingomonadales</taxon>
        <taxon>Sphingomonadaceae</taxon>
        <taxon>Sphingopyxis</taxon>
    </lineage>
</organism>
<accession>Q1GPG1</accession>
<feature type="chain" id="PRO_0000332390" description="Cobyric acid synthase">
    <location>
        <begin position="1"/>
        <end position="485"/>
    </location>
</feature>
<feature type="domain" description="GATase cobBQ-type" evidence="1">
    <location>
        <begin position="250"/>
        <end position="436"/>
    </location>
</feature>
<feature type="active site" description="Nucleophile" evidence="1">
    <location>
        <position position="332"/>
    </location>
</feature>
<feature type="active site" evidence="1">
    <location>
        <position position="428"/>
    </location>
</feature>
<reference key="1">
    <citation type="journal article" date="2009" name="Proc. Natl. Acad. Sci. U.S.A.">
        <title>The genomic basis of trophic strategy in marine bacteria.</title>
        <authorList>
            <person name="Lauro F.M."/>
            <person name="McDougald D."/>
            <person name="Thomas T."/>
            <person name="Williams T.J."/>
            <person name="Egan S."/>
            <person name="Rice S."/>
            <person name="DeMaere M.Z."/>
            <person name="Ting L."/>
            <person name="Ertan H."/>
            <person name="Johnson J."/>
            <person name="Ferriera S."/>
            <person name="Lapidus A."/>
            <person name="Anderson I."/>
            <person name="Kyrpides N."/>
            <person name="Munk A.C."/>
            <person name="Detter C."/>
            <person name="Han C.S."/>
            <person name="Brown M.V."/>
            <person name="Robb F.T."/>
            <person name="Kjelleberg S."/>
            <person name="Cavicchioli R."/>
        </authorList>
    </citation>
    <scope>NUCLEOTIDE SEQUENCE [LARGE SCALE GENOMIC DNA]</scope>
    <source>
        <strain>DSM 13593 / LMG 18877 / RB2256</strain>
    </source>
</reference>
<evidence type="ECO:0000255" key="1">
    <source>
        <dbReference type="HAMAP-Rule" id="MF_00028"/>
    </source>
</evidence>
<comment type="function">
    <text evidence="1">Catalyzes amidations at positions B, D, E, and G on adenosylcobyrinic A,C-diamide. NH(2) groups are provided by glutamine, and one molecule of ATP is hydrogenolyzed for each amidation.</text>
</comment>
<comment type="pathway">
    <text evidence="1">Cofactor biosynthesis; adenosylcobalamin biosynthesis.</text>
</comment>
<comment type="similarity">
    <text evidence="1">Belongs to the CobB/CobQ family. CobQ subfamily.</text>
</comment>
<protein>
    <recommendedName>
        <fullName evidence="1">Cobyric acid synthase</fullName>
    </recommendedName>
</protein>